<feature type="chain" id="PRO_0000177619" description="Translation initiation factor IF-3-like">
    <location>
        <begin position="1"/>
        <end position="163"/>
    </location>
</feature>
<comment type="similarity">
    <text evidence="1">Belongs to the IF-3 family.</text>
</comment>
<comment type="sequence caution" evidence="1">
    <conflict type="erroneous initiation">
        <sequence resource="EMBL-CDS" id="BAB74067"/>
    </conflict>
</comment>
<sequence>MIVVQKQLINSQIKSPQVFLIDHENNNRGLIDTYEALQLAQSVELDLVVVSQSKDTPVAKILNYGKLQYQKKKRQGQSARPTVKEVRFRPNVGAADYNLRIEQALQWLSKGDSVKFAIRLRGRENQYREQAGQMLERIVTDLSQVGKVQSLDKRSLIVQIMPA</sequence>
<dbReference type="EMBL" id="BA000019">
    <property type="protein sequence ID" value="BAB74067.1"/>
    <property type="status" value="ALT_INIT"/>
    <property type="molecule type" value="Genomic_DNA"/>
</dbReference>
<dbReference type="PIR" id="AI2101">
    <property type="entry name" value="AI2101"/>
</dbReference>
<dbReference type="SMR" id="Q8YUH8"/>
<dbReference type="STRING" id="103690.gene:10494398"/>
<dbReference type="KEGG" id="ana:all2368"/>
<dbReference type="eggNOG" id="COG0290">
    <property type="taxonomic scope" value="Bacteria"/>
</dbReference>
<dbReference type="OrthoDB" id="9806014at2"/>
<dbReference type="Proteomes" id="UP000002483">
    <property type="component" value="Chromosome"/>
</dbReference>
<dbReference type="GO" id="GO:0005737">
    <property type="term" value="C:cytoplasm"/>
    <property type="evidence" value="ECO:0007669"/>
    <property type="project" value="UniProtKB-ARBA"/>
</dbReference>
<dbReference type="GO" id="GO:0043022">
    <property type="term" value="F:ribosome binding"/>
    <property type="evidence" value="ECO:0007669"/>
    <property type="project" value="TreeGrafter"/>
</dbReference>
<dbReference type="GO" id="GO:0003743">
    <property type="term" value="F:translation initiation factor activity"/>
    <property type="evidence" value="ECO:0007669"/>
    <property type="project" value="UniProtKB-KW"/>
</dbReference>
<dbReference type="GO" id="GO:0032790">
    <property type="term" value="P:ribosome disassembly"/>
    <property type="evidence" value="ECO:0007669"/>
    <property type="project" value="TreeGrafter"/>
</dbReference>
<dbReference type="Gene3D" id="3.30.110.10">
    <property type="entry name" value="Translation initiation factor 3 (IF-3), C-terminal domain"/>
    <property type="match status" value="1"/>
</dbReference>
<dbReference type="Gene3D" id="3.10.20.80">
    <property type="entry name" value="Translation initiation factor 3 (IF-3), N-terminal domain"/>
    <property type="match status" value="1"/>
</dbReference>
<dbReference type="InterPro" id="IPR036788">
    <property type="entry name" value="T_IF-3_C_sf"/>
</dbReference>
<dbReference type="InterPro" id="IPR036787">
    <property type="entry name" value="T_IF-3_N_sf"/>
</dbReference>
<dbReference type="InterPro" id="IPR019813">
    <property type="entry name" value="Translation_initiation_fac3_CS"/>
</dbReference>
<dbReference type="InterPro" id="IPR001288">
    <property type="entry name" value="Translation_initiation_fac_3"/>
</dbReference>
<dbReference type="InterPro" id="IPR019815">
    <property type="entry name" value="Translation_initiation_fac_3_C"/>
</dbReference>
<dbReference type="InterPro" id="IPR019814">
    <property type="entry name" value="Translation_initiation_fac_3_N"/>
</dbReference>
<dbReference type="NCBIfam" id="TIGR00168">
    <property type="entry name" value="infC"/>
    <property type="match status" value="1"/>
</dbReference>
<dbReference type="PANTHER" id="PTHR10938">
    <property type="entry name" value="TRANSLATION INITIATION FACTOR IF-3"/>
    <property type="match status" value="1"/>
</dbReference>
<dbReference type="PANTHER" id="PTHR10938:SF0">
    <property type="entry name" value="TRANSLATION INITIATION FACTOR IF-3, MITOCHONDRIAL"/>
    <property type="match status" value="1"/>
</dbReference>
<dbReference type="Pfam" id="PF00707">
    <property type="entry name" value="IF3_C"/>
    <property type="match status" value="1"/>
</dbReference>
<dbReference type="Pfam" id="PF05198">
    <property type="entry name" value="IF3_N"/>
    <property type="match status" value="1"/>
</dbReference>
<dbReference type="SUPFAM" id="SSF55200">
    <property type="entry name" value="Translation initiation factor IF3, C-terminal domain"/>
    <property type="match status" value="1"/>
</dbReference>
<dbReference type="SUPFAM" id="SSF54364">
    <property type="entry name" value="Translation initiation factor IF3, N-terminal domain"/>
    <property type="match status" value="1"/>
</dbReference>
<dbReference type="PROSITE" id="PS00938">
    <property type="entry name" value="IF3"/>
    <property type="match status" value="1"/>
</dbReference>
<proteinExistence type="inferred from homology"/>
<protein>
    <recommendedName>
        <fullName>Translation initiation factor IF-3-like</fullName>
    </recommendedName>
</protein>
<accession>Q8YUH8</accession>
<evidence type="ECO:0000305" key="1"/>
<reference key="1">
    <citation type="journal article" date="2001" name="DNA Res.">
        <title>Complete genomic sequence of the filamentous nitrogen-fixing cyanobacterium Anabaena sp. strain PCC 7120.</title>
        <authorList>
            <person name="Kaneko T."/>
            <person name="Nakamura Y."/>
            <person name="Wolk C.P."/>
            <person name="Kuritz T."/>
            <person name="Sasamoto S."/>
            <person name="Watanabe A."/>
            <person name="Iriguchi M."/>
            <person name="Ishikawa A."/>
            <person name="Kawashima K."/>
            <person name="Kimura T."/>
            <person name="Kishida Y."/>
            <person name="Kohara M."/>
            <person name="Matsumoto M."/>
            <person name="Matsuno A."/>
            <person name="Muraki A."/>
            <person name="Nakazaki N."/>
            <person name="Shimpo S."/>
            <person name="Sugimoto M."/>
            <person name="Takazawa M."/>
            <person name="Yamada M."/>
            <person name="Yasuda M."/>
            <person name="Tabata S."/>
        </authorList>
    </citation>
    <scope>NUCLEOTIDE SEQUENCE [LARGE SCALE GENOMIC DNA]</scope>
    <source>
        <strain>PCC 7120 / SAG 25.82 / UTEX 2576</strain>
    </source>
</reference>
<keyword id="KW-0396">Initiation factor</keyword>
<keyword id="KW-0648">Protein biosynthesis</keyword>
<keyword id="KW-1185">Reference proteome</keyword>
<gene>
    <name type="ordered locus">all2368</name>
</gene>
<organism>
    <name type="scientific">Nostoc sp. (strain PCC 7120 / SAG 25.82 / UTEX 2576)</name>
    <dbReference type="NCBI Taxonomy" id="103690"/>
    <lineage>
        <taxon>Bacteria</taxon>
        <taxon>Bacillati</taxon>
        <taxon>Cyanobacteriota</taxon>
        <taxon>Cyanophyceae</taxon>
        <taxon>Nostocales</taxon>
        <taxon>Nostocaceae</taxon>
        <taxon>Nostoc</taxon>
    </lineage>
</organism>
<name>IF3B_NOSS1</name>